<evidence type="ECO:0000250" key="1">
    <source>
        <dbReference type="UniProtKB" id="A0A0D4WTV1"/>
    </source>
</evidence>
<evidence type="ECO:0000250" key="2">
    <source>
        <dbReference type="UniProtKB" id="A0A0D4WV12"/>
    </source>
</evidence>
<evidence type="ECO:0000250" key="3">
    <source>
        <dbReference type="UniProtKB" id="P0CE80"/>
    </source>
</evidence>
<evidence type="ECO:0000250" key="4">
    <source>
        <dbReference type="UniProtKB" id="Q4ZFU2"/>
    </source>
</evidence>
<evidence type="ECO:0000250" key="5">
    <source>
        <dbReference type="UniProtKB" id="Q8I914"/>
    </source>
</evidence>
<evidence type="ECO:0000303" key="6">
    <source>
    </source>
</evidence>
<evidence type="ECO:0000305" key="7"/>
<evidence type="ECO:0000305" key="8">
    <source>
    </source>
</evidence>
<dbReference type="EC" id="4.6.1.-" evidence="4"/>
<dbReference type="EMBL" id="FJ171492">
    <property type="protein sequence ID" value="ACN48988.1"/>
    <property type="molecule type" value="mRNA"/>
</dbReference>
<dbReference type="SMR" id="C0JB57"/>
<dbReference type="GO" id="GO:0005576">
    <property type="term" value="C:extracellular region"/>
    <property type="evidence" value="ECO:0007669"/>
    <property type="project" value="UniProtKB-SubCell"/>
</dbReference>
<dbReference type="GO" id="GO:0016829">
    <property type="term" value="F:lyase activity"/>
    <property type="evidence" value="ECO:0007669"/>
    <property type="project" value="UniProtKB-KW"/>
</dbReference>
<dbReference type="GO" id="GO:0046872">
    <property type="term" value="F:metal ion binding"/>
    <property type="evidence" value="ECO:0007669"/>
    <property type="project" value="UniProtKB-KW"/>
</dbReference>
<dbReference type="GO" id="GO:0008081">
    <property type="term" value="F:phosphoric diester hydrolase activity"/>
    <property type="evidence" value="ECO:0007669"/>
    <property type="project" value="InterPro"/>
</dbReference>
<dbReference type="GO" id="GO:0090729">
    <property type="term" value="F:toxin activity"/>
    <property type="evidence" value="ECO:0007669"/>
    <property type="project" value="UniProtKB-KW"/>
</dbReference>
<dbReference type="GO" id="GO:0031640">
    <property type="term" value="P:killing of cells of another organism"/>
    <property type="evidence" value="ECO:0007669"/>
    <property type="project" value="UniProtKB-KW"/>
</dbReference>
<dbReference type="GO" id="GO:0016042">
    <property type="term" value="P:lipid catabolic process"/>
    <property type="evidence" value="ECO:0007669"/>
    <property type="project" value="UniProtKB-KW"/>
</dbReference>
<dbReference type="CDD" id="cd08576">
    <property type="entry name" value="GDPD_like_SMaseD_PLD"/>
    <property type="match status" value="1"/>
</dbReference>
<dbReference type="Gene3D" id="3.20.20.190">
    <property type="entry name" value="Phosphatidylinositol (PI) phosphodiesterase"/>
    <property type="match status" value="1"/>
</dbReference>
<dbReference type="InterPro" id="IPR017946">
    <property type="entry name" value="PLC-like_Pdiesterase_TIM-brl"/>
</dbReference>
<dbReference type="SUPFAM" id="SSF51695">
    <property type="entry name" value="PLC-like phosphodiesterases"/>
    <property type="match status" value="1"/>
</dbReference>
<proteinExistence type="evidence at transcript level"/>
<comment type="function">
    <text evidence="1 3">Dermonecrotic toxins cleave the phosphodiester linkage between the phosphate and headgroup of certain phospholipids (sphingolipid and lysolipid substrates), forming an alcohol (often choline) and a cyclic phosphate (By similarity). This toxin acts on sphingomyelin (SM) (By similarity). It may also act on ceramide phosphoethanolamine (CPE), lysophosphatidylcholine (LPC) and lysophosphatidylethanolamine (LPE), but not on lysophosphatidylserine (LPS), and lysophosphatidylglycerol (LPG) (By similarity). It acts by transphosphatidylation, releasing exclusively cyclic phosphate products as second products (By similarity). Induces dermonecrosis, hemolysis, increased vascular permeability, edema, inflammatory response, and platelet aggregation (By similarity).</text>
</comment>
<comment type="catalytic activity">
    <reaction evidence="1">
        <text>an N-(acyl)-sphingosylphosphocholine = an N-(acyl)-sphingosyl-1,3-cyclic phosphate + choline</text>
        <dbReference type="Rhea" id="RHEA:60652"/>
        <dbReference type="ChEBI" id="CHEBI:15354"/>
        <dbReference type="ChEBI" id="CHEBI:64583"/>
        <dbReference type="ChEBI" id="CHEBI:143892"/>
    </reaction>
</comment>
<comment type="catalytic activity">
    <reaction evidence="1">
        <text>an N-(acyl)-sphingosylphosphoethanolamine = an N-(acyl)-sphingosyl-1,3-cyclic phosphate + ethanolamine</text>
        <dbReference type="Rhea" id="RHEA:60648"/>
        <dbReference type="ChEBI" id="CHEBI:57603"/>
        <dbReference type="ChEBI" id="CHEBI:143891"/>
        <dbReference type="ChEBI" id="CHEBI:143892"/>
    </reaction>
</comment>
<comment type="catalytic activity">
    <reaction evidence="1">
        <text>a 1-acyl-sn-glycero-3-phosphocholine = a 1-acyl-sn-glycero-2,3-cyclic phosphate + choline</text>
        <dbReference type="Rhea" id="RHEA:60700"/>
        <dbReference type="ChEBI" id="CHEBI:15354"/>
        <dbReference type="ChEBI" id="CHEBI:58168"/>
        <dbReference type="ChEBI" id="CHEBI:143947"/>
    </reaction>
</comment>
<comment type="catalytic activity">
    <reaction evidence="1">
        <text>a 1-acyl-sn-glycero-3-phosphoethanolamine = a 1-acyl-sn-glycero-2,3-cyclic phosphate + ethanolamine</text>
        <dbReference type="Rhea" id="RHEA:60704"/>
        <dbReference type="ChEBI" id="CHEBI:57603"/>
        <dbReference type="ChEBI" id="CHEBI:64381"/>
        <dbReference type="ChEBI" id="CHEBI:143947"/>
    </reaction>
</comment>
<comment type="cofactor">
    <cofactor evidence="5">
        <name>Mg(2+)</name>
        <dbReference type="ChEBI" id="CHEBI:18420"/>
    </cofactor>
    <text evidence="5">Binds 1 Mg(2+) ion per subunit.</text>
</comment>
<comment type="subcellular location">
    <subcellularLocation>
        <location evidence="8">Secreted</location>
    </subcellularLocation>
</comment>
<comment type="tissue specificity">
    <text evidence="8">Expressed by the venom gland.</text>
</comment>
<comment type="similarity">
    <text evidence="7">Belongs to the arthropod phospholipase D family. Class II subfamily.</text>
</comment>
<comment type="caution">
    <text evidence="1 2 4">The most common activity assay for dermonecrotic toxins detects enzymatic activity by monitoring choline release from substrate. Liberation of choline from sphingomyelin (SM) or lysophosphatidylcholine (LPC) is commonly assumed to result from substrate hydrolysis, giving either ceramide-1-phosphate (C1P) or lysophosphatidic acid (LPA), respectively, as a second product. However, two studies from Lajoie and colleagues (2013 and 2015) report the observation of exclusive formation of cyclic phosphate products as second products, resulting from intramolecular transphosphatidylation. Cyclic phosphates have vastly different biological properties from their monoester counterparts, and they may be relevant to the pathology of brown spider envenomation.</text>
</comment>
<reference key="1">
    <citation type="journal article" date="2009" name="Mol. Biol. Evol.">
        <title>Molecular evolution, functional variation, and proposed nomenclature of the gene family that includes sphingomyelinase D in sicariid spider venoms.</title>
        <authorList>
            <person name="Binford G.J."/>
            <person name="Bodner M.R."/>
            <person name="Cordes M.H."/>
            <person name="Baldwin K.L."/>
            <person name="Rynerson M.R."/>
            <person name="Burns S.N."/>
            <person name="Zobel-Thropp P.A."/>
        </authorList>
    </citation>
    <scope>NUCLEOTIDE SEQUENCE [MRNA]</scope>
    <scope>NOMENCLATURE</scope>
    <source>
        <tissue>Venom gland</tissue>
    </source>
</reference>
<name>B2J2_SICPE</name>
<protein>
    <recommendedName>
        <fullName evidence="6">Dermonecrotic toxin SpeSicTox-betaIIA3ii</fullName>
        <ecNumber evidence="4">4.6.1.-</ecNumber>
    </recommendedName>
    <alternativeName>
        <fullName>Phospholipase D</fullName>
        <shortName>PLD</shortName>
    </alternativeName>
    <alternativeName>
        <fullName>Sphingomyelin phosphodiesterase D</fullName>
        <shortName>SMD</shortName>
        <shortName>SMase D</shortName>
        <shortName>Sphingomyelinase D</shortName>
    </alternativeName>
</protein>
<accession>C0JB57</accession>
<feature type="chain" id="PRO_0000392880" description="Dermonecrotic toxin SpeSicTox-betaIIA3ii">
    <location>
        <begin position="1" status="less than"/>
        <end position="275"/>
    </location>
</feature>
<feature type="active site" evidence="5">
    <location>
        <position position="5"/>
    </location>
</feature>
<feature type="active site" description="Nucleophile" evidence="5">
    <location>
        <position position="41"/>
    </location>
</feature>
<feature type="binding site" evidence="5">
    <location>
        <position position="25"/>
    </location>
    <ligand>
        <name>Mg(2+)</name>
        <dbReference type="ChEBI" id="CHEBI:18420"/>
    </ligand>
</feature>
<feature type="binding site" evidence="5">
    <location>
        <position position="27"/>
    </location>
    <ligand>
        <name>Mg(2+)</name>
        <dbReference type="ChEBI" id="CHEBI:18420"/>
    </ligand>
</feature>
<feature type="binding site" evidence="5">
    <location>
        <position position="85"/>
    </location>
    <ligand>
        <name>Mg(2+)</name>
        <dbReference type="ChEBI" id="CHEBI:18420"/>
    </ligand>
</feature>
<feature type="disulfide bond" evidence="3">
    <location>
        <begin position="45"/>
        <end position="51"/>
    </location>
</feature>
<feature type="disulfide bond" evidence="3">
    <location>
        <begin position="47"/>
        <end position="190"/>
    </location>
</feature>
<feature type="non-terminal residue">
    <location>
        <position position="1"/>
    </location>
</feature>
<keyword id="KW-0204">Cytolysis</keyword>
<keyword id="KW-1061">Dermonecrotic toxin</keyword>
<keyword id="KW-1015">Disulfide bond</keyword>
<keyword id="KW-0354">Hemolysis</keyword>
<keyword id="KW-0442">Lipid degradation</keyword>
<keyword id="KW-0443">Lipid metabolism</keyword>
<keyword id="KW-0456">Lyase</keyword>
<keyword id="KW-0460">Magnesium</keyword>
<keyword id="KW-0479">Metal-binding</keyword>
<keyword id="KW-0964">Secreted</keyword>
<keyword id="KW-0800">Toxin</keyword>
<sequence length="275" mass="31844">WIMGHMVNAIEQVDEFLDLGANAIEFDVDFDDDGVAKYTHHRIPCDCGRLCTKYAVFTEYLDYVRQVTTPGDPKFRKELVLHALDLKLQRISSEKAYAAGVDVATKLLDHYWMRGWNGGRAYILLNIPLVEDYEFIRAFKDTLRKEGHEQYNAKVGINFTGNEDLDEIREVLEKLGEDEHIWQADGITSCFPRGTERLKKALEKRDTPGYKYIPKVYAWTLVRSSIMRRSLRLGVDGVMSNYPDSVVKVLKEKEFSDKFRLATYADNPWEKFTPI</sequence>
<organism>
    <name type="scientific">Sicarius peruensis</name>
    <name type="common">Six-eyed sand spider</name>
    <dbReference type="NCBI Taxonomy" id="571541"/>
    <lineage>
        <taxon>Eukaryota</taxon>
        <taxon>Metazoa</taxon>
        <taxon>Ecdysozoa</taxon>
        <taxon>Arthropoda</taxon>
        <taxon>Chelicerata</taxon>
        <taxon>Arachnida</taxon>
        <taxon>Araneae</taxon>
        <taxon>Araneomorphae</taxon>
        <taxon>Haplogynae</taxon>
        <taxon>Scytodoidea</taxon>
        <taxon>Sicariidae</taxon>
        <taxon>Sicarius</taxon>
    </lineage>
</organism>